<keyword id="KW-0238">DNA-binding</keyword>
<keyword id="KW-0489">Methyltransferase</keyword>
<keyword id="KW-0680">Restriction system</keyword>
<keyword id="KW-0949">S-adenosyl-L-methionine</keyword>
<keyword id="KW-0808">Transferase</keyword>
<feature type="chain" id="PRO_0000087932" description="Type II methyltransferase M.SmaI">
    <location>
        <begin position="1"/>
        <end position="292"/>
    </location>
</feature>
<feature type="region of interest" description="Disordered" evidence="1">
    <location>
        <begin position="110"/>
        <end position="130"/>
    </location>
</feature>
<name>MTSM_SERMA</name>
<accession>P14230</accession>
<organism>
    <name type="scientific">Serratia marcescens</name>
    <dbReference type="NCBI Taxonomy" id="615"/>
    <lineage>
        <taxon>Bacteria</taxon>
        <taxon>Pseudomonadati</taxon>
        <taxon>Pseudomonadota</taxon>
        <taxon>Gammaproteobacteria</taxon>
        <taxon>Enterobacterales</taxon>
        <taxon>Yersiniaceae</taxon>
        <taxon>Serratia</taxon>
    </lineage>
</organism>
<comment type="function">
    <text evidence="2 3 4">A beta subtype methylase thatnrecognizes the double-stranded sequence 5'-CCCGGG-3', methylates C-2 on both strands, and protects the DNA from cleavage by the SmaI endonuclease.</text>
</comment>
<comment type="catalytic activity">
    <reaction evidence="2">
        <text>a 2'-deoxycytidine in DNA + S-adenosyl-L-methionine = an N(4)-methyl-2'-deoxycytidine in DNA + S-adenosyl-L-homocysteine + H(+)</text>
        <dbReference type="Rhea" id="RHEA:16857"/>
        <dbReference type="Rhea" id="RHEA-COMP:11369"/>
        <dbReference type="Rhea" id="RHEA-COMP:13674"/>
        <dbReference type="ChEBI" id="CHEBI:15378"/>
        <dbReference type="ChEBI" id="CHEBI:57856"/>
        <dbReference type="ChEBI" id="CHEBI:59789"/>
        <dbReference type="ChEBI" id="CHEBI:85452"/>
        <dbReference type="ChEBI" id="CHEBI:137933"/>
        <dbReference type="EC" id="2.1.1.113"/>
    </reaction>
</comment>
<comment type="similarity">
    <text evidence="6">Belongs to the N(4)/N(6)-methyltransferase family. N(4) subfamily.</text>
</comment>
<protein>
    <recommendedName>
        <fullName evidence="4">Type II methyltransferase M.SmaI</fullName>
        <shortName evidence="5">M.SmaI</shortName>
        <ecNumber evidence="2">2.1.1.113</ecNumber>
    </recommendedName>
    <alternativeName>
        <fullName>Modification methylase SmaI</fullName>
    </alternativeName>
    <alternativeName>
        <fullName>N-4 cytosine-specific methyltransferase SmaI</fullName>
    </alternativeName>
</protein>
<proteinExistence type="evidence at protein level"/>
<gene>
    <name type="primary">smaIM</name>
</gene>
<reference key="1">
    <citation type="journal article" date="1989" name="Nucleic Acids Res.">
        <title>Cloning, characterization and heterologous expression of the SmaI restriction-modification system.</title>
        <authorList>
            <person name="Heidmann S."/>
            <person name="Seifert W."/>
            <person name="Kessler C."/>
            <person name="Domdey H."/>
        </authorList>
    </citation>
    <scope>NUCLEOTIDE SEQUENCE [GENOMIC DNA]</scope>
    <scope>FUNCTION</scope>
    <source>
        <strain>BMTU 1373</strain>
    </source>
</reference>
<reference key="2">
    <citation type="journal article" date="1990" name="Nucleic Acids Res.">
        <title>M.Smal is an N4-methylcytosine specific DNA-methylase.</title>
        <authorList>
            <person name="Klimasauskas S."/>
            <person name="Steponaviciene D."/>
            <person name="Maneliene Z."/>
            <person name="Petrusyte M."/>
            <person name="Butkus V."/>
            <person name="Janulaitis A."/>
        </authorList>
    </citation>
    <scope>NUCLEOTIDE SEQUENCE [GENOMIC DNA]</scope>
    <scope>FUNCTION</scope>
    <scope>CATALYTIC ACTIVITY</scope>
</reference>
<reference key="3">
    <citation type="submission" date="1992-08" db="EMBL/GenBank/DDBJ databases">
        <title>Characterization of the SmaI restriction and modification enzymes.</title>
        <authorList>
            <person name="Dunbar J.C."/>
            <person name="Withers B."/>
        </authorList>
    </citation>
    <scope>NUCLEOTIDE SEQUENCE [GENOMIC DNA]</scope>
</reference>
<reference key="4">
    <citation type="journal article" date="2003" name="Nucleic Acids Res.">
        <title>A nomenclature for restriction enzymes, DNA methyltransferases, homing endonucleases and their genes.</title>
        <authorList>
            <person name="Roberts R.J."/>
            <person name="Belfort M."/>
            <person name="Bestor T."/>
            <person name="Bhagwat A.S."/>
            <person name="Bickle T.A."/>
            <person name="Bitinaite J."/>
            <person name="Blumenthal R.M."/>
            <person name="Degtyarev S.K."/>
            <person name="Dryden D.T."/>
            <person name="Dybvig K."/>
            <person name="Firman K."/>
            <person name="Gromova E.S."/>
            <person name="Gumport R.I."/>
            <person name="Halford S.E."/>
            <person name="Hattman S."/>
            <person name="Heitman J."/>
            <person name="Hornby D.P."/>
            <person name="Janulaitis A."/>
            <person name="Jeltsch A."/>
            <person name="Josephsen J."/>
            <person name="Kiss A."/>
            <person name="Klaenhammer T.R."/>
            <person name="Kobayashi I."/>
            <person name="Kong H."/>
            <person name="Krueger D.H."/>
            <person name="Lacks S."/>
            <person name="Marinus M.G."/>
            <person name="Miyahara M."/>
            <person name="Morgan R.D."/>
            <person name="Murray N.E."/>
            <person name="Nagaraja V."/>
            <person name="Piekarowicz A."/>
            <person name="Pingoud A."/>
            <person name="Raleigh E."/>
            <person name="Rao D.N."/>
            <person name="Reich N."/>
            <person name="Repin V.E."/>
            <person name="Selker E.U."/>
            <person name="Shaw P.C."/>
            <person name="Stein D.C."/>
            <person name="Stoddard B.L."/>
            <person name="Szybalski W."/>
            <person name="Trautner T.A."/>
            <person name="Van Etten J.L."/>
            <person name="Vitor J.M."/>
            <person name="Wilson G.G."/>
            <person name="Xu S.Y."/>
        </authorList>
    </citation>
    <scope>NOMENCLATURE</scope>
    <scope>SUBTYPE</scope>
</reference>
<dbReference type="EC" id="2.1.1.113" evidence="2"/>
<dbReference type="EMBL" id="X16458">
    <property type="protein sequence ID" value="CAA34479.1"/>
    <property type="molecule type" value="Genomic_DNA"/>
</dbReference>
<dbReference type="EMBL" id="M98769">
    <property type="protein sequence ID" value="AAA26570.1"/>
    <property type="molecule type" value="Genomic_DNA"/>
</dbReference>
<dbReference type="PIR" id="S06036">
    <property type="entry name" value="S06036"/>
</dbReference>
<dbReference type="RefSeq" id="WP_131164850.1">
    <property type="nucleotide sequence ID" value="NZ_SDUW01000003.1"/>
</dbReference>
<dbReference type="SMR" id="P14230"/>
<dbReference type="REBASE" id="3505">
    <property type="entry name" value="M.SmaI"/>
</dbReference>
<dbReference type="BRENDA" id="2.1.1.113">
    <property type="organism ID" value="5690"/>
</dbReference>
<dbReference type="PRO" id="PR:P14230"/>
<dbReference type="GO" id="GO:0005737">
    <property type="term" value="C:cytoplasm"/>
    <property type="evidence" value="ECO:0007669"/>
    <property type="project" value="TreeGrafter"/>
</dbReference>
<dbReference type="GO" id="GO:0003677">
    <property type="term" value="F:DNA binding"/>
    <property type="evidence" value="ECO:0007669"/>
    <property type="project" value="UniProtKB-KW"/>
</dbReference>
<dbReference type="GO" id="GO:0008170">
    <property type="term" value="F:N-methyltransferase activity"/>
    <property type="evidence" value="ECO:0007669"/>
    <property type="project" value="InterPro"/>
</dbReference>
<dbReference type="GO" id="GO:0015667">
    <property type="term" value="F:site-specific DNA-methyltransferase (cytosine-N4-specific) activity"/>
    <property type="evidence" value="ECO:0007669"/>
    <property type="project" value="UniProtKB-EC"/>
</dbReference>
<dbReference type="GO" id="GO:0009307">
    <property type="term" value="P:DNA restriction-modification system"/>
    <property type="evidence" value="ECO:0007669"/>
    <property type="project" value="UniProtKB-KW"/>
</dbReference>
<dbReference type="GO" id="GO:0032259">
    <property type="term" value="P:methylation"/>
    <property type="evidence" value="ECO:0007669"/>
    <property type="project" value="UniProtKB-KW"/>
</dbReference>
<dbReference type="Gene3D" id="3.40.50.150">
    <property type="entry name" value="Vaccinia Virus protein VP39"/>
    <property type="match status" value="1"/>
</dbReference>
<dbReference type="InterPro" id="IPR002941">
    <property type="entry name" value="DNA_methylase_N4/N6"/>
</dbReference>
<dbReference type="InterPro" id="IPR017985">
    <property type="entry name" value="MeTrfase_CN4_CS"/>
</dbReference>
<dbReference type="InterPro" id="IPR001091">
    <property type="entry name" value="RM_Methyltransferase"/>
</dbReference>
<dbReference type="InterPro" id="IPR029063">
    <property type="entry name" value="SAM-dependent_MTases_sf"/>
</dbReference>
<dbReference type="PANTHER" id="PTHR13370">
    <property type="entry name" value="RNA METHYLASE-RELATED"/>
    <property type="match status" value="1"/>
</dbReference>
<dbReference type="PANTHER" id="PTHR13370:SF3">
    <property type="entry name" value="TRNA (GUANINE(10)-N2)-METHYLTRANSFERASE HOMOLOG"/>
    <property type="match status" value="1"/>
</dbReference>
<dbReference type="Pfam" id="PF01555">
    <property type="entry name" value="N6_N4_Mtase"/>
    <property type="match status" value="1"/>
</dbReference>
<dbReference type="PRINTS" id="PR00508">
    <property type="entry name" value="S21N4MTFRASE"/>
</dbReference>
<dbReference type="SUPFAM" id="SSF53335">
    <property type="entry name" value="S-adenosyl-L-methionine-dependent methyltransferases"/>
    <property type="match status" value="1"/>
</dbReference>
<dbReference type="PROSITE" id="PS00093">
    <property type="entry name" value="N4_MTASE"/>
    <property type="match status" value="1"/>
</dbReference>
<evidence type="ECO:0000256" key="1">
    <source>
        <dbReference type="SAM" id="MobiDB-lite"/>
    </source>
</evidence>
<evidence type="ECO:0000269" key="2">
    <source>
    </source>
</evidence>
<evidence type="ECO:0000269" key="3">
    <source>
    </source>
</evidence>
<evidence type="ECO:0000303" key="4">
    <source>
    </source>
</evidence>
<evidence type="ECO:0000303" key="5">
    <source>
    </source>
</evidence>
<evidence type="ECO:0000305" key="6"/>
<sequence length="292" mass="33466">MKKHSNNLDLFDQTEECLESNLRSCKIIVGDAREAVQGLDSEIFDCVVTSPPYWGLRDYGNGGQIGAEDNINDYIKDLVDLFRDVRRTLKDDGTLWLNIGDSYTSGGRTWRDKDDKNKGRAMSYRPPTPEGLKPKDLIGVPWRLAFALQNDGWYLRTDIIWNKPNCQPESVRDRPTRSHEYIFLLSKGKKYYYDWESIKEPASDPKMDKKNRRTVWNINTEPYPGSHFAVFPRAMARLCVLAGSRPGGKVLDPFFGSGTTGVVCQELDRECVGIELNEEYASLAKERILRRR</sequence>